<accession>Q1KXS5</accession>
<sequence>MKIRASVRKICEKCRLIRRRGRIIVICSNPRHKQRQG</sequence>
<evidence type="ECO:0000255" key="1">
    <source>
        <dbReference type="HAMAP-Rule" id="MF_00251"/>
    </source>
</evidence>
<evidence type="ECO:0000305" key="2"/>
<comment type="subcellular location">
    <subcellularLocation>
        <location>Plastid</location>
        <location>Chloroplast</location>
    </subcellularLocation>
</comment>
<comment type="similarity">
    <text evidence="1">Belongs to the bacterial ribosomal protein bL36 family.</text>
</comment>
<keyword id="KW-0150">Chloroplast</keyword>
<keyword id="KW-0934">Plastid</keyword>
<keyword id="KW-0687">Ribonucleoprotein</keyword>
<keyword id="KW-0689">Ribosomal protein</keyword>
<organism>
    <name type="scientific">Helianthus annuus</name>
    <name type="common">Common sunflower</name>
    <dbReference type="NCBI Taxonomy" id="4232"/>
    <lineage>
        <taxon>Eukaryota</taxon>
        <taxon>Viridiplantae</taxon>
        <taxon>Streptophyta</taxon>
        <taxon>Embryophyta</taxon>
        <taxon>Tracheophyta</taxon>
        <taxon>Spermatophyta</taxon>
        <taxon>Magnoliopsida</taxon>
        <taxon>eudicotyledons</taxon>
        <taxon>Gunneridae</taxon>
        <taxon>Pentapetalae</taxon>
        <taxon>asterids</taxon>
        <taxon>campanulids</taxon>
        <taxon>Asterales</taxon>
        <taxon>Asteraceae</taxon>
        <taxon>Asteroideae</taxon>
        <taxon>Heliantheae alliance</taxon>
        <taxon>Heliantheae</taxon>
        <taxon>Helianthus</taxon>
    </lineage>
</organism>
<gene>
    <name evidence="1" type="primary">rpl36</name>
</gene>
<dbReference type="EMBL" id="DQ383815">
    <property type="protein sequence ID" value="ABD47179.1"/>
    <property type="molecule type" value="Genomic_DNA"/>
</dbReference>
<dbReference type="RefSeq" id="YP_588151.1">
    <property type="nucleotide sequence ID" value="NC_007977.1"/>
</dbReference>
<dbReference type="SMR" id="Q1KXS5"/>
<dbReference type="GeneID" id="4055693"/>
<dbReference type="KEGG" id="han:4055693"/>
<dbReference type="GO" id="GO:0009507">
    <property type="term" value="C:chloroplast"/>
    <property type="evidence" value="ECO:0007669"/>
    <property type="project" value="UniProtKB-SubCell"/>
</dbReference>
<dbReference type="GO" id="GO:1990904">
    <property type="term" value="C:ribonucleoprotein complex"/>
    <property type="evidence" value="ECO:0007669"/>
    <property type="project" value="UniProtKB-KW"/>
</dbReference>
<dbReference type="GO" id="GO:0005840">
    <property type="term" value="C:ribosome"/>
    <property type="evidence" value="ECO:0007669"/>
    <property type="project" value="UniProtKB-KW"/>
</dbReference>
<dbReference type="GO" id="GO:0003735">
    <property type="term" value="F:structural constituent of ribosome"/>
    <property type="evidence" value="ECO:0007669"/>
    <property type="project" value="InterPro"/>
</dbReference>
<dbReference type="GO" id="GO:0006412">
    <property type="term" value="P:translation"/>
    <property type="evidence" value="ECO:0007669"/>
    <property type="project" value="UniProtKB-UniRule"/>
</dbReference>
<dbReference type="HAMAP" id="MF_00251">
    <property type="entry name" value="Ribosomal_bL36"/>
    <property type="match status" value="1"/>
</dbReference>
<dbReference type="InterPro" id="IPR000473">
    <property type="entry name" value="Ribosomal_bL36"/>
</dbReference>
<dbReference type="InterPro" id="IPR035977">
    <property type="entry name" value="Ribosomal_bL36_sp"/>
</dbReference>
<dbReference type="NCBIfam" id="TIGR01022">
    <property type="entry name" value="rpmJ_bact"/>
    <property type="match status" value="1"/>
</dbReference>
<dbReference type="PANTHER" id="PTHR42888">
    <property type="entry name" value="50S RIBOSOMAL PROTEIN L36, CHLOROPLASTIC"/>
    <property type="match status" value="1"/>
</dbReference>
<dbReference type="PANTHER" id="PTHR42888:SF1">
    <property type="entry name" value="LARGE RIBOSOMAL SUBUNIT PROTEIN BL36C"/>
    <property type="match status" value="1"/>
</dbReference>
<dbReference type="Pfam" id="PF00444">
    <property type="entry name" value="Ribosomal_L36"/>
    <property type="match status" value="1"/>
</dbReference>
<dbReference type="SUPFAM" id="SSF57840">
    <property type="entry name" value="Ribosomal protein L36"/>
    <property type="match status" value="1"/>
</dbReference>
<dbReference type="PROSITE" id="PS00828">
    <property type="entry name" value="RIBOSOMAL_L36"/>
    <property type="match status" value="1"/>
</dbReference>
<protein>
    <recommendedName>
        <fullName evidence="1">Large ribosomal subunit protein bL36c</fullName>
    </recommendedName>
    <alternativeName>
        <fullName evidence="2">50S ribosomal protein L36, chloroplastic</fullName>
    </alternativeName>
</protein>
<geneLocation type="chloroplast"/>
<reference key="1">
    <citation type="submission" date="2006-01" db="EMBL/GenBank/DDBJ databases">
        <title>A comparison of the first two published chloroplast genomes in Asteraceae: Lactuca and Helianthus.</title>
        <authorList>
            <person name="Timme R.E."/>
            <person name="Kuehl J.V."/>
            <person name="Boore J.L."/>
            <person name="Jansen R.K."/>
        </authorList>
    </citation>
    <scope>NUCLEOTIDE SEQUENCE [LARGE SCALE GENOMIC DNA]</scope>
    <source>
        <strain>cv. HA383</strain>
    </source>
</reference>
<feature type="chain" id="PRO_0000276819" description="Large ribosomal subunit protein bL36c">
    <location>
        <begin position="1"/>
        <end position="37"/>
    </location>
</feature>
<proteinExistence type="inferred from homology"/>
<name>RK36_HELAN</name>